<reference key="1">
    <citation type="journal article" date="2002" name="Proc. Natl. Acad. Sci. U.S.A.">
        <title>Emergence of multiple genotypes of H5N1 avian influenza viruses in Hong Kong SAR.</title>
        <authorList>
            <person name="Guan Y."/>
            <person name="Peiris J.S.M."/>
            <person name="Lipatov A.S."/>
            <person name="Ellis T.M."/>
            <person name="Dyrting K.C."/>
            <person name="Krauss S."/>
            <person name="Zhang L.J."/>
            <person name="Webster R.G."/>
            <person name="Shortridge K.F."/>
        </authorList>
    </citation>
    <scope>NUCLEOTIDE SEQUENCE [GENOMIC RNA]</scope>
</reference>
<gene>
    <name evidence="1" type="primary">HA</name>
</gene>
<evidence type="ECO:0000255" key="1">
    <source>
        <dbReference type="HAMAP-Rule" id="MF_04072"/>
    </source>
</evidence>
<evidence type="ECO:0007829" key="2">
    <source>
        <dbReference type="PDB" id="3S12"/>
    </source>
</evidence>
<evidence type="ECO:0007829" key="3">
    <source>
        <dbReference type="PDB" id="3S13"/>
    </source>
</evidence>
<organism>
    <name type="scientific">Influenza A virus (strain A/Chicken/Hong Kong/YU562/2001 H5N1 genotype B)</name>
    <dbReference type="NCBI Taxonomy" id="196426"/>
    <lineage>
        <taxon>Viruses</taxon>
        <taxon>Riboviria</taxon>
        <taxon>Orthornavirae</taxon>
        <taxon>Negarnaviricota</taxon>
        <taxon>Polyploviricotina</taxon>
        <taxon>Insthoviricetes</taxon>
        <taxon>Articulavirales</taxon>
        <taxon>Orthomyxoviridae</taxon>
        <taxon>Alphainfluenzavirus</taxon>
        <taxon>Alphainfluenzavirus influenzae</taxon>
        <taxon>Influenza A virus</taxon>
    </lineage>
</organism>
<comment type="function">
    <text evidence="1">Binds to sialic acid-containing receptors on the cell surface, bringing about the attachment of the virus particle to the cell. This attachment induces virion internalization either through clathrin-dependent endocytosis or through clathrin- and caveolin-independent pathway. Plays a major role in the determination of host range restriction and virulence. Class I viral fusion protein. Responsible for penetration of the virus into the cell cytoplasm by mediating the fusion of the membrane of the endocytosed virus particle with the endosomal membrane. Low pH in endosomes induces an irreversible conformational change in HA2, releasing the fusion hydrophobic peptide. Several trimers are required to form a competent fusion pore.</text>
</comment>
<comment type="subunit">
    <text evidence="1">Homotrimer of disulfide-linked HA1-HA2.</text>
</comment>
<comment type="subcellular location">
    <subcellularLocation>
        <location evidence="1">Virion membrane</location>
        <topology evidence="1">Single-pass type I membrane protein</topology>
    </subcellularLocation>
    <subcellularLocation>
        <location evidence="1">Host apical cell membrane</location>
        <topology evidence="1">Single-pass type I membrane protein</topology>
    </subcellularLocation>
    <text evidence="1">Targeted to the apical plasma membrane in epithelial polarized cells through a signal present in the transmembrane domain. Associated with glycosphingolipid- and cholesterol-enriched detergent-resistant lipid rafts.</text>
</comment>
<comment type="PTM">
    <text evidence="1">Palmitoylated.</text>
</comment>
<comment type="PTM">
    <text evidence="1">In natural infection, inactive HA is matured into HA1 and HA2 outside the cell by one or more trypsin-like, arginine-specific endoprotease secreted by the bronchial epithelial cells. One identified protease that may be involved in this process is secreted in lungs by club cells.</text>
</comment>
<comment type="miscellaneous">
    <text>Major glycoprotein, comprises over 80% of the envelope proteins present in virus particle.</text>
</comment>
<comment type="miscellaneous">
    <text>The extent of infection into host organism is determined by HA. Influenza viruses bud from the apical surface of polarized epithelial cells (e.g. bronchial epithelial cells) into lumen of lungs and are therefore usually pneumotropic. The reason is that HA is cleaved by tryptase clara which is restricted to lungs. However, HAs of H5 and H7 pantropic avian viruses subtypes can be cleaved by furin and subtilisin-type enzymes, allowing the virus to grow in other organs than lungs.</text>
</comment>
<comment type="miscellaneous">
    <text>The influenza A genome consist of 8 RNA segments. Genetic variation of hemagglutinin and/or neuraminidase genes results in the emergence of new influenza strains. The mechanism of variation can be the result of point mutations or the result of genetic reassortment between segments of two different strains.</text>
</comment>
<comment type="similarity">
    <text evidence="1">Belongs to the influenza viruses hemagglutinin family.</text>
</comment>
<name>HEMA_I01A1</name>
<protein>
    <recommendedName>
        <fullName evidence="1">Hemagglutinin</fullName>
    </recommendedName>
    <component>
        <recommendedName>
            <fullName evidence="1">Hemagglutinin HA1 chain</fullName>
        </recommendedName>
    </component>
    <component>
        <recommendedName>
            <fullName evidence="1">Hemagglutinin HA2 chain</fullName>
        </recommendedName>
    </component>
</protein>
<sequence>SLVKSDQICIGYHANNSTEQVDTIMEKNVTVTHAQDILEKTHNGKLCDLDGVKPLILRDCSVAGWLLGNPMCDEFINVPEWSYIVEKASPANDLCYPGDFNDYEELKHLLSRINHFEKIQIIPKSSWSNHEASSGVSSACPYLGKSSFFRNVVWLIKKNSAYPTIKRSYNNTNQEDLLVLWGIHHPNDAAEQTKLYQNPTTYISVGTSTLNQRLVPKIATRSKVNGQSGRMEFFWTILKPNDAINFESNGNFIAPEYAYKIVKKGDSAIMKSELEYGNCNTKCQTPMGAINSSMPFHNIHPLTIGECPKYVKSNRLVLATGLRNTPQRERRRKKRGLFGAIAGFIEGGWQGMVDGWYGYHHSNEQGSGYAADKESTQKAIDGVTNKVNSIIDKMNTQFEAVGREFNNLERRIENLNKKMEDGFLDVWTYNAELLVLMENERTLDFHDSNVKNLYDKVRLQLRDNAKELGNGCFEFYHKCDNECMESVKNGTYDYPQYSEEARLNREEISGVKLESMGTYQILSIYSTVASSLTLAIMVAGLSLWMCSNGSLQ</sequence>
<dbReference type="EMBL" id="AF509017">
    <property type="protein sequence ID" value="AAO52860.1"/>
    <property type="molecule type" value="Genomic_DNA"/>
</dbReference>
<dbReference type="PDB" id="3S12">
    <property type="method" value="X-ray"/>
    <property type="resolution" value="3.10 A"/>
    <property type="chains" value="A=6-328, B=336-511"/>
</dbReference>
<dbReference type="PDB" id="3S13">
    <property type="method" value="X-ray"/>
    <property type="resolution" value="2.96 A"/>
    <property type="chains" value="A=6-328, B=336-511"/>
</dbReference>
<dbReference type="PDBsum" id="3S12"/>
<dbReference type="PDBsum" id="3S13"/>
<dbReference type="SMR" id="Q80A30"/>
<dbReference type="UniLectin" id="Q80A30"/>
<dbReference type="GlyCosmos" id="Q80A30">
    <property type="glycosylation" value="6 sites, No reported glycans"/>
</dbReference>
<dbReference type="EvolutionaryTrace" id="Q80A30"/>
<dbReference type="GO" id="GO:0020002">
    <property type="term" value="C:host cell plasma membrane"/>
    <property type="evidence" value="ECO:0007669"/>
    <property type="project" value="UniProtKB-SubCell"/>
</dbReference>
<dbReference type="GO" id="GO:0016020">
    <property type="term" value="C:membrane"/>
    <property type="evidence" value="ECO:0007669"/>
    <property type="project" value="UniProtKB-KW"/>
</dbReference>
<dbReference type="GO" id="GO:0019031">
    <property type="term" value="C:viral envelope"/>
    <property type="evidence" value="ECO:0007669"/>
    <property type="project" value="UniProtKB-KW"/>
</dbReference>
<dbReference type="GO" id="GO:0055036">
    <property type="term" value="C:virion membrane"/>
    <property type="evidence" value="ECO:0007669"/>
    <property type="project" value="UniProtKB-SubCell"/>
</dbReference>
<dbReference type="GO" id="GO:0046789">
    <property type="term" value="F:host cell surface receptor binding"/>
    <property type="evidence" value="ECO:0007669"/>
    <property type="project" value="InterPro"/>
</dbReference>
<dbReference type="GO" id="GO:0075512">
    <property type="term" value="P:clathrin-dependent endocytosis of virus by host cell"/>
    <property type="evidence" value="ECO:0007669"/>
    <property type="project" value="UniProtKB-KW"/>
</dbReference>
<dbReference type="GO" id="GO:0039654">
    <property type="term" value="P:fusion of virus membrane with host endosome membrane"/>
    <property type="evidence" value="ECO:0007669"/>
    <property type="project" value="UniProtKB-KW"/>
</dbReference>
<dbReference type="GO" id="GO:0019064">
    <property type="term" value="P:fusion of virus membrane with host plasma membrane"/>
    <property type="evidence" value="ECO:0007669"/>
    <property type="project" value="InterPro"/>
</dbReference>
<dbReference type="GO" id="GO:0019062">
    <property type="term" value="P:virion attachment to host cell"/>
    <property type="evidence" value="ECO:0007669"/>
    <property type="project" value="UniProtKB-KW"/>
</dbReference>
<dbReference type="FunFam" id="3.90.209.20:FF:000001">
    <property type="entry name" value="Hemagglutinin"/>
    <property type="match status" value="1"/>
</dbReference>
<dbReference type="Gene3D" id="3.90.20.10">
    <property type="match status" value="1"/>
</dbReference>
<dbReference type="Gene3D" id="3.90.209.20">
    <property type="match status" value="1"/>
</dbReference>
<dbReference type="Gene3D" id="2.10.77.10">
    <property type="entry name" value="Hemagglutinin Chain A, Domain 2"/>
    <property type="match status" value="1"/>
</dbReference>
<dbReference type="HAMAP" id="MF_04072">
    <property type="entry name" value="INFV_HEMA"/>
    <property type="match status" value="1"/>
</dbReference>
<dbReference type="InterPro" id="IPR008980">
    <property type="entry name" value="Capsid_hemagglutn"/>
</dbReference>
<dbReference type="InterPro" id="IPR013828">
    <property type="entry name" value="Hemagglutn_HA1_a/b_dom_sf"/>
</dbReference>
<dbReference type="InterPro" id="IPR000149">
    <property type="entry name" value="Hemagglutn_influenz_A"/>
</dbReference>
<dbReference type="InterPro" id="IPR001364">
    <property type="entry name" value="Hemagglutn_influenz_A/B"/>
</dbReference>
<dbReference type="Pfam" id="PF00509">
    <property type="entry name" value="Hemagglutinin"/>
    <property type="match status" value="1"/>
</dbReference>
<dbReference type="PRINTS" id="PR00330">
    <property type="entry name" value="HEMAGGLUTN1"/>
</dbReference>
<dbReference type="PRINTS" id="PR00329">
    <property type="entry name" value="HEMAGGLUTN12"/>
</dbReference>
<dbReference type="SUPFAM" id="SSF58064">
    <property type="entry name" value="Influenza hemagglutinin (stalk)"/>
    <property type="match status" value="1"/>
</dbReference>
<dbReference type="SUPFAM" id="SSF49818">
    <property type="entry name" value="Viral protein domain"/>
    <property type="match status" value="1"/>
</dbReference>
<accession>Q80A30</accession>
<keyword id="KW-0002">3D-structure</keyword>
<keyword id="KW-1167">Clathrin- and caveolin-independent endocytosis of virus by host</keyword>
<keyword id="KW-1165">Clathrin-mediated endocytosis of virus by host</keyword>
<keyword id="KW-1015">Disulfide bond</keyword>
<keyword id="KW-1170">Fusion of virus membrane with host endosomal membrane</keyword>
<keyword id="KW-1168">Fusion of virus membrane with host membrane</keyword>
<keyword id="KW-0325">Glycoprotein</keyword>
<keyword id="KW-0348">Hemagglutinin</keyword>
<keyword id="KW-1032">Host cell membrane</keyword>
<keyword id="KW-1043">Host membrane</keyword>
<keyword id="KW-0945">Host-virus interaction</keyword>
<keyword id="KW-0449">Lipoprotein</keyword>
<keyword id="KW-0472">Membrane</keyword>
<keyword id="KW-0564">Palmitate</keyword>
<keyword id="KW-0812">Transmembrane</keyword>
<keyword id="KW-1133">Transmembrane helix</keyword>
<keyword id="KW-1161">Viral attachment to host cell</keyword>
<keyword id="KW-0261">Viral envelope protein</keyword>
<keyword id="KW-1162">Viral penetration into host cytoplasm</keyword>
<keyword id="KW-0946">Virion</keyword>
<keyword id="KW-1164">Virus endocytosis by host</keyword>
<keyword id="KW-1160">Virus entry into host cell</keyword>
<proteinExistence type="evidence at protein level"/>
<organismHost>
    <name type="scientific">Aves</name>
    <dbReference type="NCBI Taxonomy" id="8782"/>
</organismHost>
<organismHost>
    <name type="scientific">Felis catus</name>
    <name type="common">Cat</name>
    <name type="synonym">Felis silvestris catus</name>
    <dbReference type="NCBI Taxonomy" id="9685"/>
</organismHost>
<organismHost>
    <name type="scientific">Homo sapiens</name>
    <name type="common">Human</name>
    <dbReference type="NCBI Taxonomy" id="9606"/>
</organismHost>
<organismHost>
    <name type="scientific">Panthera pardus</name>
    <name type="common">Leopard</name>
    <name type="synonym">Felis pardus</name>
    <dbReference type="NCBI Taxonomy" id="9691"/>
</organismHost>
<organismHost>
    <name type="scientific">Panthera tigris</name>
    <name type="common">Tiger</name>
    <dbReference type="NCBI Taxonomy" id="9694"/>
</organismHost>
<organismHost>
    <name type="scientific">Sus scrofa</name>
    <name type="common">Pig</name>
    <dbReference type="NCBI Taxonomy" id="9823"/>
</organismHost>
<feature type="chain" id="PRO_0000440802" description="Hemagglutinin HA1 chain" evidence="1">
    <location>
        <begin position="1"/>
        <end position="335"/>
    </location>
</feature>
<feature type="chain" id="PRO_0000440803" description="Hemagglutinin HA2 chain" evidence="1">
    <location>
        <begin position="336"/>
        <end position="552"/>
    </location>
</feature>
<feature type="topological domain" description="Extracellular" evidence="1">
    <location>
        <begin position="1"/>
        <end position="520"/>
    </location>
</feature>
<feature type="transmembrane region" description="Helical" evidence="1">
    <location>
        <begin position="521"/>
        <end position="541"/>
    </location>
</feature>
<feature type="topological domain" description="Cytoplasmic" evidence="1">
    <location>
        <begin position="542"/>
        <end position="552"/>
    </location>
</feature>
<feature type="site" description="Cleavage; by host" evidence="1">
    <location>
        <begin position="335"/>
        <end position="336"/>
    </location>
</feature>
<feature type="lipid moiety-binding region" description="S-palmitoyl cysteine; by host" evidence="1">
    <location>
        <position position="546"/>
    </location>
</feature>
<feature type="glycosylation site" description="N-linked (GlcNAc...) asparagine; by host" evidence="1">
    <location>
        <position position="15"/>
    </location>
</feature>
<feature type="glycosylation site" description="N-linked (GlcNAc...) asparagine; by host" evidence="1">
    <location>
        <position position="16"/>
    </location>
</feature>
<feature type="glycosylation site" description="N-linked (GlcNAc...) asparagine; by host" evidence="1">
    <location>
        <position position="28"/>
    </location>
</feature>
<feature type="glycosylation site" description="N-linked (GlcNAc...) asparagine; by host" evidence="1">
    <location>
        <position position="170"/>
    </location>
</feature>
<feature type="glycosylation site" description="N-linked (GlcNAc...) asparagine; by host" evidence="1">
    <location>
        <position position="291"/>
    </location>
</feature>
<feature type="glycosylation site" description="N-linked (GlcNAc...) asparagine; by host" evidence="1">
    <location>
        <position position="489"/>
    </location>
</feature>
<feature type="disulfide bond" description="Interchain (between HA1 and HA2 chains)" evidence="1">
    <location>
        <begin position="9"/>
        <end position="472"/>
    </location>
</feature>
<feature type="disulfide bond" evidence="1">
    <location>
        <begin position="47"/>
        <end position="279"/>
    </location>
</feature>
<feature type="disulfide bond" evidence="1">
    <location>
        <begin position="60"/>
        <end position="72"/>
    </location>
</feature>
<feature type="disulfide bond" evidence="1">
    <location>
        <begin position="95"/>
        <end position="140"/>
    </location>
</feature>
<feature type="disulfide bond" evidence="1">
    <location>
        <begin position="283"/>
        <end position="307"/>
    </location>
</feature>
<feature type="disulfide bond" evidence="1">
    <location>
        <begin position="479"/>
        <end position="483"/>
    </location>
</feature>
<feature type="non-terminal residue">
    <location>
        <position position="1"/>
    </location>
</feature>
<feature type="non-terminal residue">
    <location>
        <position position="552"/>
    </location>
</feature>
<feature type="strand" evidence="2">
    <location>
        <begin position="7"/>
        <end position="13"/>
    </location>
</feature>
<feature type="strand" evidence="2">
    <location>
        <begin position="28"/>
        <end position="36"/>
    </location>
</feature>
<feature type="strand" evidence="3">
    <location>
        <begin position="44"/>
        <end position="51"/>
    </location>
</feature>
<feature type="strand" evidence="2">
    <location>
        <begin position="58"/>
        <end position="60"/>
    </location>
</feature>
<feature type="helix" evidence="3">
    <location>
        <begin position="62"/>
        <end position="67"/>
    </location>
</feature>
<feature type="helix" evidence="3">
    <location>
        <begin position="70"/>
        <end position="75"/>
    </location>
</feature>
<feature type="strand" evidence="3">
    <location>
        <begin position="84"/>
        <end position="86"/>
    </location>
</feature>
<feature type="strand" evidence="3">
    <location>
        <begin position="91"/>
        <end position="93"/>
    </location>
</feature>
<feature type="strand" evidence="3">
    <location>
        <begin position="95"/>
        <end position="100"/>
    </location>
</feature>
<feature type="helix" evidence="3">
    <location>
        <begin position="103"/>
        <end position="110"/>
    </location>
</feature>
<feature type="strand" evidence="3">
    <location>
        <begin position="113"/>
        <end position="122"/>
    </location>
</feature>
<feature type="helix" evidence="3">
    <location>
        <begin position="124"/>
        <end position="126"/>
    </location>
</feature>
<feature type="strand" evidence="3">
    <location>
        <begin position="128"/>
        <end position="131"/>
    </location>
</feature>
<feature type="strand" evidence="3">
    <location>
        <begin position="137"/>
        <end position="142"/>
    </location>
</feature>
<feature type="strand" evidence="3">
    <location>
        <begin position="145"/>
        <end position="147"/>
    </location>
</feature>
<feature type="strand" evidence="3">
    <location>
        <begin position="150"/>
        <end position="154"/>
    </location>
</feature>
<feature type="strand" evidence="3">
    <location>
        <begin position="165"/>
        <end position="170"/>
    </location>
</feature>
<feature type="strand" evidence="3">
    <location>
        <begin position="173"/>
        <end position="175"/>
    </location>
</feature>
<feature type="strand" evidence="3">
    <location>
        <begin position="177"/>
        <end position="185"/>
    </location>
</feature>
<feature type="helix" evidence="3">
    <location>
        <begin position="189"/>
        <end position="196"/>
    </location>
</feature>
<feature type="strand" evidence="3">
    <location>
        <begin position="203"/>
        <end position="206"/>
    </location>
</feature>
<feature type="strand" evidence="3">
    <location>
        <begin position="211"/>
        <end position="214"/>
    </location>
</feature>
<feature type="strand" evidence="3">
    <location>
        <begin position="229"/>
        <end position="238"/>
    </location>
</feature>
<feature type="strand" evidence="3">
    <location>
        <begin position="243"/>
        <end position="264"/>
    </location>
</feature>
<feature type="strand" evidence="3">
    <location>
        <begin position="269"/>
        <end position="271"/>
    </location>
</feature>
<feature type="strand" evidence="3">
    <location>
        <begin position="276"/>
        <end position="284"/>
    </location>
</feature>
<feature type="strand" evidence="3">
    <location>
        <begin position="295"/>
        <end position="297"/>
    </location>
</feature>
<feature type="strand" evidence="3">
    <location>
        <begin position="304"/>
        <end position="306"/>
    </location>
</feature>
<feature type="strand" evidence="2">
    <location>
        <begin position="317"/>
        <end position="319"/>
    </location>
</feature>
<feature type="strand" evidence="2">
    <location>
        <begin position="349"/>
        <end position="351"/>
    </location>
</feature>
<feature type="strand" evidence="2">
    <location>
        <begin position="356"/>
        <end position="362"/>
    </location>
</feature>
<feature type="strand" evidence="2">
    <location>
        <begin position="367"/>
        <end position="371"/>
    </location>
</feature>
<feature type="helix" evidence="2">
    <location>
        <begin position="373"/>
        <end position="392"/>
    </location>
</feature>
<feature type="helix" evidence="3">
    <location>
        <begin position="410"/>
        <end position="435"/>
    </location>
</feature>
<feature type="strand" evidence="2">
    <location>
        <begin position="464"/>
        <end position="467"/>
    </location>
</feature>
<feature type="strand" evidence="2">
    <location>
        <begin position="469"/>
        <end position="477"/>
    </location>
</feature>
<feature type="helix" evidence="2">
    <location>
        <begin position="481"/>
        <end position="488"/>
    </location>
</feature>
<feature type="helix" evidence="2">
    <location>
        <begin position="494"/>
        <end position="497"/>
    </location>
</feature>